<reference key="1">
    <citation type="journal article" date="2010" name="J. Bacteriol.">
        <title>Whole genome sequences of two Xylella fastidiosa strains (M12 and M23) causing almond leaf scorch disease in California.</title>
        <authorList>
            <person name="Chen J."/>
            <person name="Xie G."/>
            <person name="Han S."/>
            <person name="Chertkov O."/>
            <person name="Sims D."/>
            <person name="Civerolo E.L."/>
        </authorList>
    </citation>
    <scope>NUCLEOTIDE SEQUENCE [LARGE SCALE GENOMIC DNA]</scope>
    <source>
        <strain>M12</strain>
    </source>
</reference>
<dbReference type="EMBL" id="CP000941">
    <property type="protein sequence ID" value="ACA11512.1"/>
    <property type="molecule type" value="Genomic_DNA"/>
</dbReference>
<dbReference type="SMR" id="B0U5K8"/>
<dbReference type="KEGG" id="xfm:Xfasm12_0503"/>
<dbReference type="HOGENOM" id="CLU_073626_1_1_6"/>
<dbReference type="GO" id="GO:0022627">
    <property type="term" value="C:cytosolic small ribosomal subunit"/>
    <property type="evidence" value="ECO:0007669"/>
    <property type="project" value="TreeGrafter"/>
</dbReference>
<dbReference type="GO" id="GO:0019843">
    <property type="term" value="F:rRNA binding"/>
    <property type="evidence" value="ECO:0007669"/>
    <property type="project" value="UniProtKB-UniRule"/>
</dbReference>
<dbReference type="GO" id="GO:0003735">
    <property type="term" value="F:structural constituent of ribosome"/>
    <property type="evidence" value="ECO:0007669"/>
    <property type="project" value="InterPro"/>
</dbReference>
<dbReference type="GO" id="GO:0006412">
    <property type="term" value="P:translation"/>
    <property type="evidence" value="ECO:0007669"/>
    <property type="project" value="UniProtKB-UniRule"/>
</dbReference>
<dbReference type="CDD" id="cd00364">
    <property type="entry name" value="Ribosomal_uS17"/>
    <property type="match status" value="1"/>
</dbReference>
<dbReference type="Gene3D" id="2.40.50.140">
    <property type="entry name" value="Nucleic acid-binding proteins"/>
    <property type="match status" value="1"/>
</dbReference>
<dbReference type="HAMAP" id="MF_01345_B">
    <property type="entry name" value="Ribosomal_uS17_B"/>
    <property type="match status" value="1"/>
</dbReference>
<dbReference type="InterPro" id="IPR012340">
    <property type="entry name" value="NA-bd_OB-fold"/>
</dbReference>
<dbReference type="InterPro" id="IPR000266">
    <property type="entry name" value="Ribosomal_uS17"/>
</dbReference>
<dbReference type="InterPro" id="IPR019984">
    <property type="entry name" value="Ribosomal_uS17_bact/chlr"/>
</dbReference>
<dbReference type="NCBIfam" id="NF004123">
    <property type="entry name" value="PRK05610.1"/>
    <property type="match status" value="1"/>
</dbReference>
<dbReference type="NCBIfam" id="TIGR03635">
    <property type="entry name" value="uS17_bact"/>
    <property type="match status" value="1"/>
</dbReference>
<dbReference type="PANTHER" id="PTHR10744">
    <property type="entry name" value="40S RIBOSOMAL PROTEIN S11 FAMILY MEMBER"/>
    <property type="match status" value="1"/>
</dbReference>
<dbReference type="PANTHER" id="PTHR10744:SF1">
    <property type="entry name" value="SMALL RIBOSOMAL SUBUNIT PROTEIN US17M"/>
    <property type="match status" value="1"/>
</dbReference>
<dbReference type="Pfam" id="PF00366">
    <property type="entry name" value="Ribosomal_S17"/>
    <property type="match status" value="1"/>
</dbReference>
<dbReference type="PRINTS" id="PR00973">
    <property type="entry name" value="RIBOSOMALS17"/>
</dbReference>
<dbReference type="SUPFAM" id="SSF50249">
    <property type="entry name" value="Nucleic acid-binding proteins"/>
    <property type="match status" value="1"/>
</dbReference>
<accession>B0U5K8</accession>
<name>RS17_XYLFM</name>
<comment type="function">
    <text evidence="1">One of the primary rRNA binding proteins, it binds specifically to the 5'-end of 16S ribosomal RNA.</text>
</comment>
<comment type="subunit">
    <text evidence="1">Part of the 30S ribosomal subunit.</text>
</comment>
<comment type="similarity">
    <text evidence="1">Belongs to the universal ribosomal protein uS17 family.</text>
</comment>
<proteinExistence type="inferred from homology"/>
<gene>
    <name evidence="1" type="primary">rpsQ</name>
    <name type="ordered locus">Xfasm12_0503</name>
</gene>
<feature type="chain" id="PRO_1000143326" description="Small ribosomal subunit protein uS17">
    <location>
        <begin position="1"/>
        <end position="89"/>
    </location>
</feature>
<sequence length="89" mass="10247">MMNDNNERKPLRTIKGRVISNKMQKTVTVLVERQIKHALYGKYIKRSTKIHAHDADDLCNEGDVVLMTEVAPISKTKNWRVVEIVARSD</sequence>
<protein>
    <recommendedName>
        <fullName evidence="1">Small ribosomal subunit protein uS17</fullName>
    </recommendedName>
    <alternativeName>
        <fullName evidence="2">30S ribosomal protein S17</fullName>
    </alternativeName>
</protein>
<keyword id="KW-0687">Ribonucleoprotein</keyword>
<keyword id="KW-0689">Ribosomal protein</keyword>
<keyword id="KW-0694">RNA-binding</keyword>
<keyword id="KW-0699">rRNA-binding</keyword>
<organism>
    <name type="scientific">Xylella fastidiosa (strain M12)</name>
    <dbReference type="NCBI Taxonomy" id="405440"/>
    <lineage>
        <taxon>Bacteria</taxon>
        <taxon>Pseudomonadati</taxon>
        <taxon>Pseudomonadota</taxon>
        <taxon>Gammaproteobacteria</taxon>
        <taxon>Lysobacterales</taxon>
        <taxon>Lysobacteraceae</taxon>
        <taxon>Xylella</taxon>
    </lineage>
</organism>
<evidence type="ECO:0000255" key="1">
    <source>
        <dbReference type="HAMAP-Rule" id="MF_01345"/>
    </source>
</evidence>
<evidence type="ECO:0000305" key="2"/>